<sequence length="204" mass="22422">MAPKKPEPKKDDAKAAAPKAAPAPAAAPAAAPAAAPEPERPKEAEFDASKIKIEFTPEQIEEFKEAFLLFDRTPKGEMKITYGQCGDVLRALGQNPTQAEVLRVLGKPKQEELNSKMMDFETFLPMLQHISKNKDTGTYEDFVEGLRVFDKEGNGTVMGAELRHVLATLGERLTEDEVEKLMAGQEDSNGCINYEAFVKHIMAS</sequence>
<comment type="function">
    <text>Regulatory light chain of myosin. Does not bind calcium.</text>
</comment>
<comment type="subunit">
    <text>Myosin is a hexamer of 2 heavy chains and 4 light chains.</text>
</comment>
<comment type="PTM">
    <text evidence="5">N-terminus is methylated by METTL11A/NTM1.</text>
</comment>
<proteinExistence type="evidence at protein level"/>
<feature type="initiator methionine" description="Removed" evidence="5">
    <location>
        <position position="1"/>
    </location>
</feature>
<feature type="chain" id="PRO_0000198697" description="Myosin light chain 3">
    <location>
        <begin position="2"/>
        <end position="204"/>
    </location>
</feature>
<feature type="domain" description="EF-hand 1" evidence="3">
    <location>
        <begin position="58"/>
        <end position="95"/>
    </location>
</feature>
<feature type="domain" description="EF-hand 2" evidence="3">
    <location>
        <begin position="137"/>
        <end position="172"/>
    </location>
</feature>
<feature type="domain" description="EF-hand 3" evidence="3">
    <location>
        <begin position="172"/>
        <end position="204"/>
    </location>
</feature>
<feature type="region of interest" description="Disordered" evidence="4">
    <location>
        <begin position="1"/>
        <end position="47"/>
    </location>
</feature>
<feature type="compositionally biased region" description="Basic and acidic residues" evidence="4">
    <location>
        <begin position="1"/>
        <end position="14"/>
    </location>
</feature>
<feature type="compositionally biased region" description="Low complexity" evidence="4">
    <location>
        <begin position="15"/>
        <end position="36"/>
    </location>
</feature>
<feature type="compositionally biased region" description="Basic and acidic residues" evidence="4">
    <location>
        <begin position="37"/>
        <end position="47"/>
    </location>
</feature>
<feature type="modified residue" description="N,N,N-trimethylalanine; by NTM1" evidence="5">
    <location>
        <position position="2"/>
    </location>
</feature>
<feature type="modified residue" description="Phosphothreonine" evidence="2">
    <location>
        <position position="97"/>
    </location>
</feature>
<feature type="modified residue" description="Phosphothreonine" evidence="9">
    <location>
        <position position="136"/>
    </location>
</feature>
<feature type="modified residue" description="Phosphothreonine" evidence="2">
    <location>
        <position position="138"/>
    </location>
</feature>
<feature type="modified residue" description="Phosphotyrosine" evidence="2">
    <location>
        <position position="139"/>
    </location>
</feature>
<feature type="modified residue" description="Phosphoserine" evidence="9">
    <location>
        <position position="188"/>
    </location>
</feature>
<evidence type="ECO:0000250" key="1">
    <source>
        <dbReference type="UniProtKB" id="P08590"/>
    </source>
</evidence>
<evidence type="ECO:0000250" key="2">
    <source>
        <dbReference type="UniProtKB" id="P16409"/>
    </source>
</evidence>
<evidence type="ECO:0000255" key="3">
    <source>
        <dbReference type="PROSITE-ProRule" id="PRU00448"/>
    </source>
</evidence>
<evidence type="ECO:0000256" key="4">
    <source>
        <dbReference type="SAM" id="MobiDB-lite"/>
    </source>
</evidence>
<evidence type="ECO:0000269" key="5">
    <source>
    </source>
</evidence>
<evidence type="ECO:0000305" key="6"/>
<evidence type="ECO:0000305" key="7">
    <source>
    </source>
</evidence>
<evidence type="ECO:0000312" key="8">
    <source>
        <dbReference type="MGI" id="MGI:97268"/>
    </source>
</evidence>
<evidence type="ECO:0007744" key="9">
    <source>
    </source>
</evidence>
<organism>
    <name type="scientific">Mus musculus</name>
    <name type="common">Mouse</name>
    <dbReference type="NCBI Taxonomy" id="10090"/>
    <lineage>
        <taxon>Eukaryota</taxon>
        <taxon>Metazoa</taxon>
        <taxon>Chordata</taxon>
        <taxon>Craniata</taxon>
        <taxon>Vertebrata</taxon>
        <taxon>Euteleostomi</taxon>
        <taxon>Mammalia</taxon>
        <taxon>Eutheria</taxon>
        <taxon>Euarchontoglires</taxon>
        <taxon>Glires</taxon>
        <taxon>Rodentia</taxon>
        <taxon>Myomorpha</taxon>
        <taxon>Muroidea</taxon>
        <taxon>Muridae</taxon>
        <taxon>Murinae</taxon>
        <taxon>Mus</taxon>
        <taxon>Mus</taxon>
    </lineage>
</organism>
<keyword id="KW-0002">3D-structure</keyword>
<keyword id="KW-0488">Methylation</keyword>
<keyword id="KW-0505">Motor protein</keyword>
<keyword id="KW-0514">Muscle protein</keyword>
<keyword id="KW-0518">Myosin</keyword>
<keyword id="KW-0597">Phosphoprotein</keyword>
<keyword id="KW-1185">Reference proteome</keyword>
<keyword id="KW-0677">Repeat</keyword>
<reference key="1">
    <citation type="journal article" date="2005" name="Science">
        <title>The transcriptional landscape of the mammalian genome.</title>
        <authorList>
            <person name="Carninci P."/>
            <person name="Kasukawa T."/>
            <person name="Katayama S."/>
            <person name="Gough J."/>
            <person name="Frith M.C."/>
            <person name="Maeda N."/>
            <person name="Oyama R."/>
            <person name="Ravasi T."/>
            <person name="Lenhard B."/>
            <person name="Wells C."/>
            <person name="Kodzius R."/>
            <person name="Shimokawa K."/>
            <person name="Bajic V.B."/>
            <person name="Brenner S.E."/>
            <person name="Batalov S."/>
            <person name="Forrest A.R."/>
            <person name="Zavolan M."/>
            <person name="Davis M.J."/>
            <person name="Wilming L.G."/>
            <person name="Aidinis V."/>
            <person name="Allen J.E."/>
            <person name="Ambesi-Impiombato A."/>
            <person name="Apweiler R."/>
            <person name="Aturaliya R.N."/>
            <person name="Bailey T.L."/>
            <person name="Bansal M."/>
            <person name="Baxter L."/>
            <person name="Beisel K.W."/>
            <person name="Bersano T."/>
            <person name="Bono H."/>
            <person name="Chalk A.M."/>
            <person name="Chiu K.P."/>
            <person name="Choudhary V."/>
            <person name="Christoffels A."/>
            <person name="Clutterbuck D.R."/>
            <person name="Crowe M.L."/>
            <person name="Dalla E."/>
            <person name="Dalrymple B.P."/>
            <person name="de Bono B."/>
            <person name="Della Gatta G."/>
            <person name="di Bernardo D."/>
            <person name="Down T."/>
            <person name="Engstrom P."/>
            <person name="Fagiolini M."/>
            <person name="Faulkner G."/>
            <person name="Fletcher C.F."/>
            <person name="Fukushima T."/>
            <person name="Furuno M."/>
            <person name="Futaki S."/>
            <person name="Gariboldi M."/>
            <person name="Georgii-Hemming P."/>
            <person name="Gingeras T.R."/>
            <person name="Gojobori T."/>
            <person name="Green R.E."/>
            <person name="Gustincich S."/>
            <person name="Harbers M."/>
            <person name="Hayashi Y."/>
            <person name="Hensch T.K."/>
            <person name="Hirokawa N."/>
            <person name="Hill D."/>
            <person name="Huminiecki L."/>
            <person name="Iacono M."/>
            <person name="Ikeo K."/>
            <person name="Iwama A."/>
            <person name="Ishikawa T."/>
            <person name="Jakt M."/>
            <person name="Kanapin A."/>
            <person name="Katoh M."/>
            <person name="Kawasawa Y."/>
            <person name="Kelso J."/>
            <person name="Kitamura H."/>
            <person name="Kitano H."/>
            <person name="Kollias G."/>
            <person name="Krishnan S.P."/>
            <person name="Kruger A."/>
            <person name="Kummerfeld S.K."/>
            <person name="Kurochkin I.V."/>
            <person name="Lareau L.F."/>
            <person name="Lazarevic D."/>
            <person name="Lipovich L."/>
            <person name="Liu J."/>
            <person name="Liuni S."/>
            <person name="McWilliam S."/>
            <person name="Madan Babu M."/>
            <person name="Madera M."/>
            <person name="Marchionni L."/>
            <person name="Matsuda H."/>
            <person name="Matsuzawa S."/>
            <person name="Miki H."/>
            <person name="Mignone F."/>
            <person name="Miyake S."/>
            <person name="Morris K."/>
            <person name="Mottagui-Tabar S."/>
            <person name="Mulder N."/>
            <person name="Nakano N."/>
            <person name="Nakauchi H."/>
            <person name="Ng P."/>
            <person name="Nilsson R."/>
            <person name="Nishiguchi S."/>
            <person name="Nishikawa S."/>
            <person name="Nori F."/>
            <person name="Ohara O."/>
            <person name="Okazaki Y."/>
            <person name="Orlando V."/>
            <person name="Pang K.C."/>
            <person name="Pavan W.J."/>
            <person name="Pavesi G."/>
            <person name="Pesole G."/>
            <person name="Petrovsky N."/>
            <person name="Piazza S."/>
            <person name="Reed J."/>
            <person name="Reid J.F."/>
            <person name="Ring B.Z."/>
            <person name="Ringwald M."/>
            <person name="Rost B."/>
            <person name="Ruan Y."/>
            <person name="Salzberg S.L."/>
            <person name="Sandelin A."/>
            <person name="Schneider C."/>
            <person name="Schoenbach C."/>
            <person name="Sekiguchi K."/>
            <person name="Semple C.A."/>
            <person name="Seno S."/>
            <person name="Sessa L."/>
            <person name="Sheng Y."/>
            <person name="Shibata Y."/>
            <person name="Shimada H."/>
            <person name="Shimada K."/>
            <person name="Silva D."/>
            <person name="Sinclair B."/>
            <person name="Sperling S."/>
            <person name="Stupka E."/>
            <person name="Sugiura K."/>
            <person name="Sultana R."/>
            <person name="Takenaka Y."/>
            <person name="Taki K."/>
            <person name="Tammoja K."/>
            <person name="Tan S.L."/>
            <person name="Tang S."/>
            <person name="Taylor M.S."/>
            <person name="Tegner J."/>
            <person name="Teichmann S.A."/>
            <person name="Ueda H.R."/>
            <person name="van Nimwegen E."/>
            <person name="Verardo R."/>
            <person name="Wei C.L."/>
            <person name="Yagi K."/>
            <person name="Yamanishi H."/>
            <person name="Zabarovsky E."/>
            <person name="Zhu S."/>
            <person name="Zimmer A."/>
            <person name="Hide W."/>
            <person name="Bult C."/>
            <person name="Grimmond S.M."/>
            <person name="Teasdale R.D."/>
            <person name="Liu E.T."/>
            <person name="Brusic V."/>
            <person name="Quackenbush J."/>
            <person name="Wahlestedt C."/>
            <person name="Mattick J.S."/>
            <person name="Hume D.A."/>
            <person name="Kai C."/>
            <person name="Sasaki D."/>
            <person name="Tomaru Y."/>
            <person name="Fukuda S."/>
            <person name="Kanamori-Katayama M."/>
            <person name="Suzuki M."/>
            <person name="Aoki J."/>
            <person name="Arakawa T."/>
            <person name="Iida J."/>
            <person name="Imamura K."/>
            <person name="Itoh M."/>
            <person name="Kato T."/>
            <person name="Kawaji H."/>
            <person name="Kawagashira N."/>
            <person name="Kawashima T."/>
            <person name="Kojima M."/>
            <person name="Kondo S."/>
            <person name="Konno H."/>
            <person name="Nakano K."/>
            <person name="Ninomiya N."/>
            <person name="Nishio T."/>
            <person name="Okada M."/>
            <person name="Plessy C."/>
            <person name="Shibata K."/>
            <person name="Shiraki T."/>
            <person name="Suzuki S."/>
            <person name="Tagami M."/>
            <person name="Waki K."/>
            <person name="Watahiki A."/>
            <person name="Okamura-Oho Y."/>
            <person name="Suzuki H."/>
            <person name="Kawai J."/>
            <person name="Hayashizaki Y."/>
        </authorList>
    </citation>
    <scope>NUCLEOTIDE SEQUENCE [LARGE SCALE MRNA]</scope>
    <source>
        <strain>C57BL/6J</strain>
        <tissue>Embryo</tissue>
        <tissue>Heart</tissue>
        <tissue>Kidney</tissue>
    </source>
</reference>
<reference key="2">
    <citation type="journal article" date="2004" name="Genome Res.">
        <title>The status, quality, and expansion of the NIH full-length cDNA project: the Mammalian Gene Collection (MGC).</title>
        <authorList>
            <consortium name="The MGC Project Team"/>
        </authorList>
    </citation>
    <scope>NUCLEOTIDE SEQUENCE [LARGE SCALE MRNA]</scope>
    <source>
        <tissue>Heart</tissue>
        <tissue>Lung</tissue>
    </source>
</reference>
<reference key="3">
    <citation type="journal article" date="1988" name="Nucleic Acids Res.">
        <title>Promoter analysis of myosin alkali light chain genes expressed in mouse striated muscle.</title>
        <authorList>
            <person name="Cohen A."/>
            <person name="Barton P.J.R."/>
            <person name="Robert B."/>
            <person name="Garner I."/>
            <person name="Alonso S."/>
            <person name="Buckingham M.E."/>
        </authorList>
    </citation>
    <scope>NUCLEOTIDE SEQUENCE [GENOMIC DNA] OF 1-52</scope>
    <source>
        <strain>C3H/HeJ</strain>
        <tissue>Spleen</tissue>
    </source>
</reference>
<reference key="4">
    <citation type="journal article" date="2010" name="Cell">
        <title>A tissue-specific atlas of mouse protein phosphorylation and expression.</title>
        <authorList>
            <person name="Huttlin E.L."/>
            <person name="Jedrychowski M.P."/>
            <person name="Elias J.E."/>
            <person name="Goswami T."/>
            <person name="Rad R."/>
            <person name="Beausoleil S.A."/>
            <person name="Villen J."/>
            <person name="Haas W."/>
            <person name="Sowa M.E."/>
            <person name="Gygi S.P."/>
        </authorList>
    </citation>
    <scope>PHOSPHORYLATION [LARGE SCALE ANALYSIS] AT THR-136 AND SER-188</scope>
    <scope>IDENTIFICATION BY MASS SPECTROMETRY [LARGE SCALE ANALYSIS]</scope>
    <source>
        <tissue>Brown adipose tissue</tissue>
        <tissue>Heart</tissue>
        <tissue>Kidney</tissue>
        <tissue>Lung</tissue>
    </source>
</reference>
<reference key="5">
    <citation type="journal article" date="2010" name="Nature">
        <title>NRMT is an alpha-N-methyltransferase that methylates RCC1 and retinoblastoma protein.</title>
        <authorList>
            <person name="Tooley C.E."/>
            <person name="Petkowski J.J."/>
            <person name="Muratore-Schroeder T.L."/>
            <person name="Balsbaugh J.L."/>
            <person name="Shabanowitz J."/>
            <person name="Sabat M."/>
            <person name="Minor W."/>
            <person name="Hunt D.F."/>
            <person name="Macara I.G."/>
        </authorList>
    </citation>
    <scope>CLEAVAGE OF INITIATOR METHIONINE</scope>
    <scope>METHYLATION AT ALA-2</scope>
</reference>
<gene>
    <name evidence="8" type="primary">Myl3</name>
    <name evidence="8" type="synonym">Mlc1v</name>
    <name evidence="8" type="synonym">Mylc</name>
</gene>
<protein>
    <recommendedName>
        <fullName evidence="6">Myosin light chain 3</fullName>
    </recommendedName>
    <alternativeName>
        <fullName evidence="7">Myosin alkali light chain 1, ventricular/slow skeletal muscle isoform</fullName>
    </alternativeName>
    <alternativeName>
        <fullName evidence="1">Myosin light chain 1, slow-twitch muscle B/ventricular isoform</fullName>
        <shortName evidence="1">MLC1SB</shortName>
    </alternativeName>
</protein>
<name>MYL3_MOUSE</name>
<accession>P09542</accession>
<accession>Q3UIF4</accession>
<accession>Q9CQZ2</accession>
<dbReference type="EMBL" id="AK002312">
    <property type="protein sequence ID" value="BAB22006.1"/>
    <property type="molecule type" value="mRNA"/>
</dbReference>
<dbReference type="EMBL" id="AK011518">
    <property type="protein sequence ID" value="BAB27672.1"/>
    <property type="molecule type" value="mRNA"/>
</dbReference>
<dbReference type="EMBL" id="AK146943">
    <property type="protein sequence ID" value="BAE27552.1"/>
    <property type="molecule type" value="mRNA"/>
</dbReference>
<dbReference type="EMBL" id="BC061222">
    <property type="protein sequence ID" value="AAH61222.1"/>
    <property type="molecule type" value="mRNA"/>
</dbReference>
<dbReference type="EMBL" id="X12972">
    <property type="protein sequence ID" value="CAA31415.1"/>
    <property type="molecule type" value="Genomic_DNA"/>
</dbReference>
<dbReference type="CCDS" id="CCDS23571.1"/>
<dbReference type="PIR" id="S01945">
    <property type="entry name" value="S01945"/>
</dbReference>
<dbReference type="RefSeq" id="NP_001351413.1">
    <property type="nucleotide sequence ID" value="NM_001364484.1"/>
</dbReference>
<dbReference type="RefSeq" id="NP_034989.1">
    <property type="nucleotide sequence ID" value="NM_010859.3"/>
</dbReference>
<dbReference type="PDB" id="8Q6T">
    <property type="method" value="EM"/>
    <property type="resolution" value="18.00 A"/>
    <property type="chains" value="C/D/J/K/R/S=53-204"/>
</dbReference>
<dbReference type="PDBsum" id="8Q6T"/>
<dbReference type="EMDB" id="EMD-18198"/>
<dbReference type="SMR" id="P09542"/>
<dbReference type="BioGRID" id="201654">
    <property type="interactions" value="5"/>
</dbReference>
<dbReference type="FunCoup" id="P09542">
    <property type="interactions" value="264"/>
</dbReference>
<dbReference type="IntAct" id="P09542">
    <property type="interactions" value="2"/>
</dbReference>
<dbReference type="STRING" id="10090.ENSMUSP00000078715"/>
<dbReference type="GlyGen" id="P09542">
    <property type="glycosylation" value="1 site, 1 O-linked glycan (1 site)"/>
</dbReference>
<dbReference type="iPTMnet" id="P09542"/>
<dbReference type="PhosphoSitePlus" id="P09542"/>
<dbReference type="jPOST" id="P09542"/>
<dbReference type="PaxDb" id="10090-ENSMUSP00000078715"/>
<dbReference type="PeptideAtlas" id="P09542"/>
<dbReference type="ProteomicsDB" id="286119"/>
<dbReference type="Pumba" id="P09542"/>
<dbReference type="Antibodypedia" id="12839">
    <property type="antibodies" value="388 antibodies from 35 providers"/>
</dbReference>
<dbReference type="DNASU" id="17897"/>
<dbReference type="Ensembl" id="ENSMUST00000079784.12">
    <property type="protein sequence ID" value="ENSMUSP00000078715.8"/>
    <property type="gene ID" value="ENSMUSG00000059741.14"/>
</dbReference>
<dbReference type="GeneID" id="17897"/>
<dbReference type="KEGG" id="mmu:17897"/>
<dbReference type="UCSC" id="uc009rur.1">
    <property type="organism name" value="mouse"/>
</dbReference>
<dbReference type="AGR" id="MGI:97268"/>
<dbReference type="CTD" id="4634"/>
<dbReference type="MGI" id="MGI:97268">
    <property type="gene designation" value="Myl3"/>
</dbReference>
<dbReference type="VEuPathDB" id="HostDB:ENSMUSG00000059741"/>
<dbReference type="eggNOG" id="KOG0030">
    <property type="taxonomic scope" value="Eukaryota"/>
</dbReference>
<dbReference type="GeneTree" id="ENSGT01030000234570"/>
<dbReference type="HOGENOM" id="CLU_061288_13_0_1"/>
<dbReference type="InParanoid" id="P09542"/>
<dbReference type="OMA" id="YDRTPKC"/>
<dbReference type="OrthoDB" id="5959761at2759"/>
<dbReference type="PhylomeDB" id="P09542"/>
<dbReference type="TreeFam" id="TF351553"/>
<dbReference type="Reactome" id="R-MMU-390522">
    <property type="pathway name" value="Striated Muscle Contraction"/>
</dbReference>
<dbReference type="BioGRID-ORCS" id="17897">
    <property type="hits" value="1 hit in 76 CRISPR screens"/>
</dbReference>
<dbReference type="ChiTaRS" id="Myl3">
    <property type="organism name" value="mouse"/>
</dbReference>
<dbReference type="PRO" id="PR:P09542"/>
<dbReference type="Proteomes" id="UP000000589">
    <property type="component" value="Chromosome 9"/>
</dbReference>
<dbReference type="RNAct" id="P09542">
    <property type="molecule type" value="protein"/>
</dbReference>
<dbReference type="Bgee" id="ENSMUSG00000059741">
    <property type="expression patterns" value="Expressed in interventricular septum and 167 other cell types or tissues"/>
</dbReference>
<dbReference type="ExpressionAtlas" id="P09542">
    <property type="expression patterns" value="baseline and differential"/>
</dbReference>
<dbReference type="GO" id="GO:0031672">
    <property type="term" value="C:A band"/>
    <property type="evidence" value="ECO:0007669"/>
    <property type="project" value="Ensembl"/>
</dbReference>
<dbReference type="GO" id="GO:0031674">
    <property type="term" value="C:I band"/>
    <property type="evidence" value="ECO:0007669"/>
    <property type="project" value="Ensembl"/>
</dbReference>
<dbReference type="GO" id="GO:0016459">
    <property type="term" value="C:myosin complex"/>
    <property type="evidence" value="ECO:0007669"/>
    <property type="project" value="UniProtKB-KW"/>
</dbReference>
<dbReference type="GO" id="GO:0003785">
    <property type="term" value="F:actin monomer binding"/>
    <property type="evidence" value="ECO:0007669"/>
    <property type="project" value="Ensembl"/>
</dbReference>
<dbReference type="GO" id="GO:0005509">
    <property type="term" value="F:calcium ion binding"/>
    <property type="evidence" value="ECO:0007669"/>
    <property type="project" value="InterPro"/>
</dbReference>
<dbReference type="GO" id="GO:0060048">
    <property type="term" value="P:cardiac muscle contraction"/>
    <property type="evidence" value="ECO:0007669"/>
    <property type="project" value="Ensembl"/>
</dbReference>
<dbReference type="GO" id="GO:0006942">
    <property type="term" value="P:regulation of striated muscle contraction"/>
    <property type="evidence" value="ECO:0007669"/>
    <property type="project" value="Ensembl"/>
</dbReference>
<dbReference type="GO" id="GO:0002026">
    <property type="term" value="P:regulation of the force of heart contraction"/>
    <property type="evidence" value="ECO:0007669"/>
    <property type="project" value="Ensembl"/>
</dbReference>
<dbReference type="GO" id="GO:0055010">
    <property type="term" value="P:ventricular cardiac muscle tissue morphogenesis"/>
    <property type="evidence" value="ECO:0007669"/>
    <property type="project" value="Ensembl"/>
</dbReference>
<dbReference type="CDD" id="cd00051">
    <property type="entry name" value="EFh"/>
    <property type="match status" value="1"/>
</dbReference>
<dbReference type="FunFam" id="1.10.238.10:FF:000019">
    <property type="entry name" value="Myosin light chain 1 skeletal"/>
    <property type="match status" value="1"/>
</dbReference>
<dbReference type="FunFam" id="1.10.238.10:FF:000056">
    <property type="entry name" value="Myosin light chain 1 skeletal"/>
    <property type="match status" value="1"/>
</dbReference>
<dbReference type="Gene3D" id="1.10.238.10">
    <property type="entry name" value="EF-hand"/>
    <property type="match status" value="2"/>
</dbReference>
<dbReference type="InterPro" id="IPR050230">
    <property type="entry name" value="CALM/Myosin/TropC-like"/>
</dbReference>
<dbReference type="InterPro" id="IPR011992">
    <property type="entry name" value="EF-hand-dom_pair"/>
</dbReference>
<dbReference type="InterPro" id="IPR002048">
    <property type="entry name" value="EF_hand_dom"/>
</dbReference>
<dbReference type="PANTHER" id="PTHR23048">
    <property type="entry name" value="MYOSIN LIGHT CHAIN 1, 3"/>
    <property type="match status" value="1"/>
</dbReference>
<dbReference type="PANTHER" id="PTHR23048:SF2">
    <property type="entry name" value="MYOSIN LIGHT CHAIN 3"/>
    <property type="match status" value="1"/>
</dbReference>
<dbReference type="SUPFAM" id="SSF47473">
    <property type="entry name" value="EF-hand"/>
    <property type="match status" value="1"/>
</dbReference>
<dbReference type="PROSITE" id="PS50222">
    <property type="entry name" value="EF_HAND_2"/>
    <property type="match status" value="3"/>
</dbReference>